<feature type="transit peptide" description="Mitochondrion" evidence="4">
    <location>
        <begin position="1"/>
        <end position="22"/>
    </location>
</feature>
<feature type="chain" id="PRO_0000306102" description="Acyl-coenzyme A synthetase ACSM5, mitochondrial">
    <location>
        <begin position="23"/>
        <end position="578"/>
    </location>
</feature>
<feature type="binding site" evidence="1">
    <location>
        <begin position="229"/>
        <end position="237"/>
    </location>
    <ligand>
        <name>ATP</name>
        <dbReference type="ChEBI" id="CHEBI:30616"/>
    </ligand>
</feature>
<feature type="binding site" evidence="1">
    <location>
        <begin position="367"/>
        <end position="372"/>
    </location>
    <ligand>
        <name>ATP</name>
        <dbReference type="ChEBI" id="CHEBI:30616"/>
    </ligand>
</feature>
<feature type="binding site" evidence="1">
    <location>
        <position position="454"/>
    </location>
    <ligand>
        <name>ATP</name>
        <dbReference type="ChEBI" id="CHEBI:30616"/>
    </ligand>
</feature>
<feature type="binding site" evidence="1">
    <location>
        <position position="469"/>
    </location>
    <ligand>
        <name>ATP</name>
        <dbReference type="ChEBI" id="CHEBI:30616"/>
    </ligand>
</feature>
<feature type="binding site" evidence="1">
    <location>
        <position position="565"/>
    </location>
    <ligand>
        <name>ATP</name>
        <dbReference type="ChEBI" id="CHEBI:30616"/>
    </ligand>
</feature>
<feature type="modified residue" description="N6-acetyllysine; alternate" evidence="8">
    <location>
        <position position="96"/>
    </location>
</feature>
<feature type="modified residue" description="N6-succinyllysine; alternate" evidence="9">
    <location>
        <position position="96"/>
    </location>
</feature>
<feature type="modified residue" description="N6-acetyllysine" evidence="8">
    <location>
        <position position="151"/>
    </location>
</feature>
<feature type="modified residue" description="N6-acetyllysine; alternate" evidence="8">
    <location>
        <position position="302"/>
    </location>
</feature>
<feature type="modified residue" description="N6-succinyllysine; alternate" evidence="9">
    <location>
        <position position="302"/>
    </location>
</feature>
<feature type="modified residue" description="N6-acetyllysine" evidence="8">
    <location>
        <position position="335"/>
    </location>
</feature>
<feature type="splice variant" id="VSP_028399" description="In isoform 2." evidence="5 6">
    <original>TLCR</original>
    <variation>VRRKI</variation>
    <location>
        <begin position="307"/>
        <end position="310"/>
    </location>
</feature>
<feature type="splice variant" id="VSP_028400" description="In isoform 2." evidence="5 6">
    <location>
        <begin position="311"/>
        <end position="578"/>
    </location>
</feature>
<feature type="sequence conflict" description="In Ref. 1; BAC34084." evidence="7" ref="1">
    <original>R</original>
    <variation>T</variation>
    <location>
        <position position="6"/>
    </location>
</feature>
<feature type="sequence conflict" description="In Ref. 1; BAC34084." evidence="7" ref="1">
    <original>L</original>
    <variation>S</variation>
    <location>
        <position position="59"/>
    </location>
</feature>
<feature type="sequence conflict" description="In Ref. 1; BAC34084." evidence="7" ref="1">
    <original>K</original>
    <variation>N</variation>
    <location>
        <position position="96"/>
    </location>
</feature>
<feature type="sequence conflict" description="In Ref. 1; BAC30656." evidence="7" ref="1">
    <original>G</original>
    <variation>E</variation>
    <location>
        <position position="114"/>
    </location>
</feature>
<feature type="sequence conflict" description="In Ref. 1; BAC34167/BAE28980." evidence="7" ref="1">
    <original>S</original>
    <variation>G</variation>
    <location>
        <position position="253"/>
    </location>
</feature>
<organism>
    <name type="scientific">Mus musculus</name>
    <name type="common">Mouse</name>
    <dbReference type="NCBI Taxonomy" id="10090"/>
    <lineage>
        <taxon>Eukaryota</taxon>
        <taxon>Metazoa</taxon>
        <taxon>Chordata</taxon>
        <taxon>Craniata</taxon>
        <taxon>Vertebrata</taxon>
        <taxon>Euteleostomi</taxon>
        <taxon>Mammalia</taxon>
        <taxon>Eutheria</taxon>
        <taxon>Euarchontoglires</taxon>
        <taxon>Glires</taxon>
        <taxon>Rodentia</taxon>
        <taxon>Myomorpha</taxon>
        <taxon>Muroidea</taxon>
        <taxon>Muridae</taxon>
        <taxon>Murinae</taxon>
        <taxon>Mus</taxon>
        <taxon>Mus</taxon>
    </lineage>
</organism>
<gene>
    <name type="primary">Acsm5</name>
    <name type="synonym">Macs3</name>
</gene>
<sequence length="578" mass="64328">MRLWLRGLACQALRSSWGVCRIHTQPPPPPIPEVVATWEAISLGRQPVPEYFNFAHDVLDVWSQLEKTGHRPPNPAFWWVNGSGTEVKWTFEELGKQSRKAANVLEGVCGLQPGDRMMLVLPRLPDWWLISVACMRTGVVMIPGVSQLTAKDLKYRLQAARAKSIVTSDALAPQVDAISADCPSLQTKLLVSDTSRPGWINFRELLRAASPEHNCVRTRSGDSVAIYFTSGTTGAPKMVEHSQSSYGLGFVASGRRWMALTESDIFWNTTDTGWVKAAWTLFSAWSNGACIFVHELPRVDAKTILNTLCRFPITTLCCVPTLFRLLVQEDLTRYKFQCLRHCLTGGEALNPDVRDKWKSQTGLELHEGYGQSETVVICGNSRNSTIKSGSMGKASPPYDVQIVDEEGNVLPPGKEGNIAVRIKPTRPFCFFNCYLDNPEKTAASEQGDFYITGDRAHMDEDGYFWFLGRNDDVINSSSYRIGPVEVESALAEHPAVLESAVVSSPDPIRGEVVKAFIVLSPAYASHDPEALTRELQEHVKTVTAPYKYPRKVAFISELPKTVSGKILRSKLRNQEWGR</sequence>
<proteinExistence type="evidence at protein level"/>
<accession>Q8BGA8</accession>
<accession>Q8BJS0</accession>
<accession>Q8BM02</accession>
<accession>Q8BWQ8</accession>
<accession>Q8BWS7</accession>
<protein>
    <recommendedName>
        <fullName>Acyl-coenzyme A synthetase ACSM5, mitochondrial</fullName>
        <ecNumber evidence="2">6.2.1.2</ecNumber>
    </recommendedName>
</protein>
<evidence type="ECO:0000250" key="1"/>
<evidence type="ECO:0000250" key="2">
    <source>
        <dbReference type="UniProtKB" id="Q08AH1"/>
    </source>
</evidence>
<evidence type="ECO:0000250" key="3">
    <source>
        <dbReference type="UniProtKB" id="Q91VA0"/>
    </source>
</evidence>
<evidence type="ECO:0000255" key="4"/>
<evidence type="ECO:0000303" key="5">
    <source>
    </source>
</evidence>
<evidence type="ECO:0000303" key="6">
    <source>
    </source>
</evidence>
<evidence type="ECO:0000305" key="7"/>
<evidence type="ECO:0007744" key="8">
    <source>
    </source>
</evidence>
<evidence type="ECO:0007744" key="9">
    <source>
    </source>
</evidence>
<keyword id="KW-0007">Acetylation</keyword>
<keyword id="KW-0025">Alternative splicing</keyword>
<keyword id="KW-0067">ATP-binding</keyword>
<keyword id="KW-0276">Fatty acid metabolism</keyword>
<keyword id="KW-0436">Ligase</keyword>
<keyword id="KW-0443">Lipid metabolism</keyword>
<keyword id="KW-0460">Magnesium</keyword>
<keyword id="KW-0479">Metal-binding</keyword>
<keyword id="KW-0496">Mitochondrion</keyword>
<keyword id="KW-0547">Nucleotide-binding</keyword>
<keyword id="KW-1185">Reference proteome</keyword>
<keyword id="KW-0809">Transit peptide</keyword>
<name>ACSM5_MOUSE</name>
<dbReference type="EC" id="6.2.1.2" evidence="2"/>
<dbReference type="EMBL" id="AK040650">
    <property type="protein sequence ID" value="BAC30656.1"/>
    <property type="molecule type" value="mRNA"/>
</dbReference>
<dbReference type="EMBL" id="AK050132">
    <property type="protein sequence ID" value="BAC34084.1"/>
    <property type="molecule type" value="mRNA"/>
</dbReference>
<dbReference type="EMBL" id="AK050219">
    <property type="protein sequence ID" value="BAC34130.1"/>
    <property type="molecule type" value="mRNA"/>
</dbReference>
<dbReference type="EMBL" id="AK050288">
    <property type="protein sequence ID" value="BAC34167.1"/>
    <property type="molecule type" value="mRNA"/>
</dbReference>
<dbReference type="EMBL" id="AK050458">
    <property type="protein sequence ID" value="BAC34268.1"/>
    <property type="molecule type" value="mRNA"/>
</dbReference>
<dbReference type="EMBL" id="AK080219">
    <property type="protein sequence ID" value="BAC37850.1"/>
    <property type="molecule type" value="mRNA"/>
</dbReference>
<dbReference type="EMBL" id="AK149591">
    <property type="protein sequence ID" value="BAE28980.1"/>
    <property type="molecule type" value="mRNA"/>
</dbReference>
<dbReference type="EMBL" id="BC095985">
    <property type="protein sequence ID" value="AAH95985.1"/>
    <property type="molecule type" value="mRNA"/>
</dbReference>
<dbReference type="CCDS" id="CCDS40106.1">
    <molecule id="Q8BGA8-1"/>
</dbReference>
<dbReference type="RefSeq" id="NP_848873.1">
    <molecule id="Q8BGA8-1"/>
    <property type="nucleotide sequence ID" value="NM_178758.3"/>
</dbReference>
<dbReference type="SMR" id="Q8BGA8"/>
<dbReference type="FunCoup" id="Q8BGA8">
    <property type="interactions" value="44"/>
</dbReference>
<dbReference type="STRING" id="10090.ENSMUSP00000063416"/>
<dbReference type="iPTMnet" id="Q8BGA8"/>
<dbReference type="PhosphoSitePlus" id="Q8BGA8"/>
<dbReference type="SwissPalm" id="Q8BGA8"/>
<dbReference type="jPOST" id="Q8BGA8"/>
<dbReference type="PaxDb" id="10090-ENSMUSP00000063416"/>
<dbReference type="PeptideAtlas" id="Q8BGA8"/>
<dbReference type="ProteomicsDB" id="285715">
    <molecule id="Q8BGA8-1"/>
</dbReference>
<dbReference type="ProteomicsDB" id="285716">
    <molecule id="Q8BGA8-2"/>
</dbReference>
<dbReference type="Antibodypedia" id="25526">
    <property type="antibodies" value="112 antibodies from 18 providers"/>
</dbReference>
<dbReference type="DNASU" id="272428"/>
<dbReference type="Ensembl" id="ENSMUST00000066465.3">
    <molecule id="Q8BGA8-1"/>
    <property type="protein sequence ID" value="ENSMUSP00000063416.2"/>
    <property type="gene ID" value="ENSMUSG00000030972.7"/>
</dbReference>
<dbReference type="Ensembl" id="ENSMUST00000207387.2">
    <molecule id="Q8BGA8-2"/>
    <property type="protein sequence ID" value="ENSMUSP00000146357.2"/>
    <property type="gene ID" value="ENSMUSG00000030972.7"/>
</dbReference>
<dbReference type="Ensembl" id="ENSMUST00000207440.2">
    <molecule id="Q8BGA8-1"/>
    <property type="protein sequence ID" value="ENSMUSP00000146938.2"/>
    <property type="gene ID" value="ENSMUSG00000030972.7"/>
</dbReference>
<dbReference type="GeneID" id="272428"/>
<dbReference type="KEGG" id="mmu:272428"/>
<dbReference type="UCSC" id="uc009jle.1">
    <molecule id="Q8BGA8-2"/>
    <property type="organism name" value="mouse"/>
</dbReference>
<dbReference type="UCSC" id="uc009jlf.1">
    <molecule id="Q8BGA8-1"/>
    <property type="organism name" value="mouse"/>
</dbReference>
<dbReference type="AGR" id="MGI:2444086"/>
<dbReference type="CTD" id="54988"/>
<dbReference type="MGI" id="MGI:2444086">
    <property type="gene designation" value="Acsm5"/>
</dbReference>
<dbReference type="VEuPathDB" id="HostDB:ENSMUSG00000030972"/>
<dbReference type="eggNOG" id="KOG1175">
    <property type="taxonomic scope" value="Eukaryota"/>
</dbReference>
<dbReference type="GeneTree" id="ENSGT00940000161148"/>
<dbReference type="HOGENOM" id="CLU_000022_59_10_1"/>
<dbReference type="InParanoid" id="Q8BGA8"/>
<dbReference type="OMA" id="PFNWALD"/>
<dbReference type="OrthoDB" id="6614653at2759"/>
<dbReference type="PhylomeDB" id="Q8BGA8"/>
<dbReference type="TreeFam" id="TF354287"/>
<dbReference type="Reactome" id="R-MMU-177128">
    <property type="pathway name" value="Conjugation of salicylate with glycine"/>
</dbReference>
<dbReference type="Reactome" id="R-MMU-9749641">
    <property type="pathway name" value="Aspirin ADME"/>
</dbReference>
<dbReference type="BioGRID-ORCS" id="272428">
    <property type="hits" value="1 hit in 79 CRISPR screens"/>
</dbReference>
<dbReference type="ChiTaRS" id="Marcksl1">
    <property type="organism name" value="mouse"/>
</dbReference>
<dbReference type="PRO" id="PR:Q8BGA8"/>
<dbReference type="Proteomes" id="UP000000589">
    <property type="component" value="Chromosome 7"/>
</dbReference>
<dbReference type="RNAct" id="Q8BGA8">
    <property type="molecule type" value="protein"/>
</dbReference>
<dbReference type="Bgee" id="ENSMUSG00000030972">
    <property type="expression patterns" value="Expressed in left lobe of liver and 56 other cell types or tissues"/>
</dbReference>
<dbReference type="ExpressionAtlas" id="Q8BGA8">
    <property type="expression patterns" value="baseline and differential"/>
</dbReference>
<dbReference type="GO" id="GO:0005759">
    <property type="term" value="C:mitochondrial matrix"/>
    <property type="evidence" value="ECO:0007669"/>
    <property type="project" value="UniProtKB-SubCell"/>
</dbReference>
<dbReference type="GO" id="GO:0005524">
    <property type="term" value="F:ATP binding"/>
    <property type="evidence" value="ECO:0007669"/>
    <property type="project" value="UniProtKB-KW"/>
</dbReference>
<dbReference type="GO" id="GO:0031956">
    <property type="term" value="F:medium-chain fatty acid-CoA ligase activity"/>
    <property type="evidence" value="ECO:0007669"/>
    <property type="project" value="UniProtKB-EC"/>
</dbReference>
<dbReference type="GO" id="GO:0046872">
    <property type="term" value="F:metal ion binding"/>
    <property type="evidence" value="ECO:0007669"/>
    <property type="project" value="UniProtKB-KW"/>
</dbReference>
<dbReference type="GO" id="GO:0006631">
    <property type="term" value="P:fatty acid metabolic process"/>
    <property type="evidence" value="ECO:0007669"/>
    <property type="project" value="UniProtKB-KW"/>
</dbReference>
<dbReference type="FunFam" id="3.40.50.12780:FF:000007">
    <property type="entry name" value="Acyl-coenzyme A synthetase ACSM2A, mitochondrial"/>
    <property type="match status" value="1"/>
</dbReference>
<dbReference type="FunFam" id="3.30.300.30:FF:000005">
    <property type="entry name" value="Acyl-coenzyme A synthetase ACSM5, mitochondrial"/>
    <property type="match status" value="1"/>
</dbReference>
<dbReference type="Gene3D" id="3.30.300.30">
    <property type="match status" value="1"/>
</dbReference>
<dbReference type="Gene3D" id="3.40.50.12780">
    <property type="entry name" value="N-terminal domain of ligase-like"/>
    <property type="match status" value="1"/>
</dbReference>
<dbReference type="InterPro" id="IPR025110">
    <property type="entry name" value="AMP-bd_C"/>
</dbReference>
<dbReference type="InterPro" id="IPR045851">
    <property type="entry name" value="AMP-bd_C_sf"/>
</dbReference>
<dbReference type="InterPro" id="IPR020845">
    <property type="entry name" value="AMP-binding_CS"/>
</dbReference>
<dbReference type="InterPro" id="IPR000873">
    <property type="entry name" value="AMP-dep_synth/lig_dom"/>
</dbReference>
<dbReference type="InterPro" id="IPR042099">
    <property type="entry name" value="ANL_N_sf"/>
</dbReference>
<dbReference type="InterPro" id="IPR051087">
    <property type="entry name" value="Mitochondrial_ACSM"/>
</dbReference>
<dbReference type="PANTHER" id="PTHR43605">
    <property type="entry name" value="ACYL-COENZYME A SYNTHETASE"/>
    <property type="match status" value="1"/>
</dbReference>
<dbReference type="PANTHER" id="PTHR43605:SF6">
    <property type="entry name" value="ACYL-COENZYME A SYNTHETASE ACSM5, MITOCHONDRIAL"/>
    <property type="match status" value="1"/>
</dbReference>
<dbReference type="Pfam" id="PF00501">
    <property type="entry name" value="AMP-binding"/>
    <property type="match status" value="1"/>
</dbReference>
<dbReference type="Pfam" id="PF13193">
    <property type="entry name" value="AMP-binding_C"/>
    <property type="match status" value="1"/>
</dbReference>
<dbReference type="SUPFAM" id="SSF56801">
    <property type="entry name" value="Acetyl-CoA synthetase-like"/>
    <property type="match status" value="1"/>
</dbReference>
<dbReference type="PROSITE" id="PS00455">
    <property type="entry name" value="AMP_BINDING"/>
    <property type="match status" value="1"/>
</dbReference>
<reference key="1">
    <citation type="journal article" date="2005" name="Science">
        <title>The transcriptional landscape of the mammalian genome.</title>
        <authorList>
            <person name="Carninci P."/>
            <person name="Kasukawa T."/>
            <person name="Katayama S."/>
            <person name="Gough J."/>
            <person name="Frith M.C."/>
            <person name="Maeda N."/>
            <person name="Oyama R."/>
            <person name="Ravasi T."/>
            <person name="Lenhard B."/>
            <person name="Wells C."/>
            <person name="Kodzius R."/>
            <person name="Shimokawa K."/>
            <person name="Bajic V.B."/>
            <person name="Brenner S.E."/>
            <person name="Batalov S."/>
            <person name="Forrest A.R."/>
            <person name="Zavolan M."/>
            <person name="Davis M.J."/>
            <person name="Wilming L.G."/>
            <person name="Aidinis V."/>
            <person name="Allen J.E."/>
            <person name="Ambesi-Impiombato A."/>
            <person name="Apweiler R."/>
            <person name="Aturaliya R.N."/>
            <person name="Bailey T.L."/>
            <person name="Bansal M."/>
            <person name="Baxter L."/>
            <person name="Beisel K.W."/>
            <person name="Bersano T."/>
            <person name="Bono H."/>
            <person name="Chalk A.M."/>
            <person name="Chiu K.P."/>
            <person name="Choudhary V."/>
            <person name="Christoffels A."/>
            <person name="Clutterbuck D.R."/>
            <person name="Crowe M.L."/>
            <person name="Dalla E."/>
            <person name="Dalrymple B.P."/>
            <person name="de Bono B."/>
            <person name="Della Gatta G."/>
            <person name="di Bernardo D."/>
            <person name="Down T."/>
            <person name="Engstrom P."/>
            <person name="Fagiolini M."/>
            <person name="Faulkner G."/>
            <person name="Fletcher C.F."/>
            <person name="Fukushima T."/>
            <person name="Furuno M."/>
            <person name="Futaki S."/>
            <person name="Gariboldi M."/>
            <person name="Georgii-Hemming P."/>
            <person name="Gingeras T.R."/>
            <person name="Gojobori T."/>
            <person name="Green R.E."/>
            <person name="Gustincich S."/>
            <person name="Harbers M."/>
            <person name="Hayashi Y."/>
            <person name="Hensch T.K."/>
            <person name="Hirokawa N."/>
            <person name="Hill D."/>
            <person name="Huminiecki L."/>
            <person name="Iacono M."/>
            <person name="Ikeo K."/>
            <person name="Iwama A."/>
            <person name="Ishikawa T."/>
            <person name="Jakt M."/>
            <person name="Kanapin A."/>
            <person name="Katoh M."/>
            <person name="Kawasawa Y."/>
            <person name="Kelso J."/>
            <person name="Kitamura H."/>
            <person name="Kitano H."/>
            <person name="Kollias G."/>
            <person name="Krishnan S.P."/>
            <person name="Kruger A."/>
            <person name="Kummerfeld S.K."/>
            <person name="Kurochkin I.V."/>
            <person name="Lareau L.F."/>
            <person name="Lazarevic D."/>
            <person name="Lipovich L."/>
            <person name="Liu J."/>
            <person name="Liuni S."/>
            <person name="McWilliam S."/>
            <person name="Madan Babu M."/>
            <person name="Madera M."/>
            <person name="Marchionni L."/>
            <person name="Matsuda H."/>
            <person name="Matsuzawa S."/>
            <person name="Miki H."/>
            <person name="Mignone F."/>
            <person name="Miyake S."/>
            <person name="Morris K."/>
            <person name="Mottagui-Tabar S."/>
            <person name="Mulder N."/>
            <person name="Nakano N."/>
            <person name="Nakauchi H."/>
            <person name="Ng P."/>
            <person name="Nilsson R."/>
            <person name="Nishiguchi S."/>
            <person name="Nishikawa S."/>
            <person name="Nori F."/>
            <person name="Ohara O."/>
            <person name="Okazaki Y."/>
            <person name="Orlando V."/>
            <person name="Pang K.C."/>
            <person name="Pavan W.J."/>
            <person name="Pavesi G."/>
            <person name="Pesole G."/>
            <person name="Petrovsky N."/>
            <person name="Piazza S."/>
            <person name="Reed J."/>
            <person name="Reid J.F."/>
            <person name="Ring B.Z."/>
            <person name="Ringwald M."/>
            <person name="Rost B."/>
            <person name="Ruan Y."/>
            <person name="Salzberg S.L."/>
            <person name="Sandelin A."/>
            <person name="Schneider C."/>
            <person name="Schoenbach C."/>
            <person name="Sekiguchi K."/>
            <person name="Semple C.A."/>
            <person name="Seno S."/>
            <person name="Sessa L."/>
            <person name="Sheng Y."/>
            <person name="Shibata Y."/>
            <person name="Shimada H."/>
            <person name="Shimada K."/>
            <person name="Silva D."/>
            <person name="Sinclair B."/>
            <person name="Sperling S."/>
            <person name="Stupka E."/>
            <person name="Sugiura K."/>
            <person name="Sultana R."/>
            <person name="Takenaka Y."/>
            <person name="Taki K."/>
            <person name="Tammoja K."/>
            <person name="Tan S.L."/>
            <person name="Tang S."/>
            <person name="Taylor M.S."/>
            <person name="Tegner J."/>
            <person name="Teichmann S.A."/>
            <person name="Ueda H.R."/>
            <person name="van Nimwegen E."/>
            <person name="Verardo R."/>
            <person name="Wei C.L."/>
            <person name="Yagi K."/>
            <person name="Yamanishi H."/>
            <person name="Zabarovsky E."/>
            <person name="Zhu S."/>
            <person name="Zimmer A."/>
            <person name="Hide W."/>
            <person name="Bult C."/>
            <person name="Grimmond S.M."/>
            <person name="Teasdale R.D."/>
            <person name="Liu E.T."/>
            <person name="Brusic V."/>
            <person name="Quackenbush J."/>
            <person name="Wahlestedt C."/>
            <person name="Mattick J.S."/>
            <person name="Hume D.A."/>
            <person name="Kai C."/>
            <person name="Sasaki D."/>
            <person name="Tomaru Y."/>
            <person name="Fukuda S."/>
            <person name="Kanamori-Katayama M."/>
            <person name="Suzuki M."/>
            <person name="Aoki J."/>
            <person name="Arakawa T."/>
            <person name="Iida J."/>
            <person name="Imamura K."/>
            <person name="Itoh M."/>
            <person name="Kato T."/>
            <person name="Kawaji H."/>
            <person name="Kawagashira N."/>
            <person name="Kawashima T."/>
            <person name="Kojima M."/>
            <person name="Kondo S."/>
            <person name="Konno H."/>
            <person name="Nakano K."/>
            <person name="Ninomiya N."/>
            <person name="Nishio T."/>
            <person name="Okada M."/>
            <person name="Plessy C."/>
            <person name="Shibata K."/>
            <person name="Shiraki T."/>
            <person name="Suzuki S."/>
            <person name="Tagami M."/>
            <person name="Waki K."/>
            <person name="Watahiki A."/>
            <person name="Okamura-Oho Y."/>
            <person name="Suzuki H."/>
            <person name="Kawai J."/>
            <person name="Hayashizaki Y."/>
        </authorList>
    </citation>
    <scope>NUCLEOTIDE SEQUENCE [LARGE SCALE MRNA] (ISOFORMS 1 AND 2)</scope>
    <source>
        <strain>C57BL/6J</strain>
        <tissue>Aorta</tissue>
        <tissue>Liver</tissue>
        <tissue>Vein</tissue>
    </source>
</reference>
<reference key="2">
    <citation type="journal article" date="2004" name="Genome Res.">
        <title>The status, quality, and expansion of the NIH full-length cDNA project: the Mammalian Gene Collection (MGC).</title>
        <authorList>
            <consortium name="The MGC Project Team"/>
        </authorList>
    </citation>
    <scope>NUCLEOTIDE SEQUENCE [LARGE SCALE MRNA] (ISOFORM 2)</scope>
    <source>
        <strain>FVB/N</strain>
        <tissue>Kidney</tissue>
    </source>
</reference>
<reference key="3">
    <citation type="journal article" date="2010" name="Cell">
        <title>A tissue-specific atlas of mouse protein phosphorylation and expression.</title>
        <authorList>
            <person name="Huttlin E.L."/>
            <person name="Jedrychowski M.P."/>
            <person name="Elias J.E."/>
            <person name="Goswami T."/>
            <person name="Rad R."/>
            <person name="Beausoleil S.A."/>
            <person name="Villen J."/>
            <person name="Haas W."/>
            <person name="Sowa M.E."/>
            <person name="Gygi S.P."/>
        </authorList>
    </citation>
    <scope>IDENTIFICATION BY MASS SPECTROMETRY [LARGE SCALE ANALYSIS]</scope>
    <source>
        <tissue>Kidney</tissue>
        <tissue>Liver</tissue>
    </source>
</reference>
<reference key="4">
    <citation type="journal article" date="2013" name="Mol. Cell">
        <title>SIRT5-mediated lysine desuccinylation impacts diverse metabolic pathways.</title>
        <authorList>
            <person name="Park J."/>
            <person name="Chen Y."/>
            <person name="Tishkoff D.X."/>
            <person name="Peng C."/>
            <person name="Tan M."/>
            <person name="Dai L."/>
            <person name="Xie Z."/>
            <person name="Zhang Y."/>
            <person name="Zwaans B.M."/>
            <person name="Skinner M.E."/>
            <person name="Lombard D.B."/>
            <person name="Zhao Y."/>
        </authorList>
    </citation>
    <scope>SUCCINYLATION [LARGE SCALE ANALYSIS] AT LYS-96 AND LYS-302</scope>
    <scope>IDENTIFICATION BY MASS SPECTROMETRY [LARGE SCALE ANALYSIS]</scope>
    <source>
        <tissue>Liver</tissue>
    </source>
</reference>
<reference key="5">
    <citation type="journal article" date="2013" name="Proc. Natl. Acad. Sci. U.S.A.">
        <title>Label-free quantitative proteomics of the lysine acetylome in mitochondria identifies substrates of SIRT3 in metabolic pathways.</title>
        <authorList>
            <person name="Rardin M.J."/>
            <person name="Newman J.C."/>
            <person name="Held J.M."/>
            <person name="Cusack M.P."/>
            <person name="Sorensen D.J."/>
            <person name="Li B."/>
            <person name="Schilling B."/>
            <person name="Mooney S.D."/>
            <person name="Kahn C.R."/>
            <person name="Verdin E."/>
            <person name="Gibson B.W."/>
        </authorList>
    </citation>
    <scope>ACETYLATION [LARGE SCALE ANALYSIS] AT LYS-96; LYS-151; LYS-302 AND LYS-335</scope>
    <scope>IDENTIFICATION BY MASS SPECTROMETRY [LARGE SCALE ANALYSIS]</scope>
    <source>
        <tissue>Liver</tissue>
    </source>
</reference>
<comment type="function">
    <text evidence="2">Catalyzes the activation of fatty acids by CoA to produce an acyl-CoA, the first step in fatty acid metabolism.</text>
</comment>
<comment type="catalytic activity">
    <reaction>
        <text>a medium-chain fatty acid + ATP + CoA = a medium-chain fatty acyl-CoA + AMP + diphosphate</text>
        <dbReference type="Rhea" id="RHEA:48340"/>
        <dbReference type="ChEBI" id="CHEBI:30616"/>
        <dbReference type="ChEBI" id="CHEBI:33019"/>
        <dbReference type="ChEBI" id="CHEBI:57287"/>
        <dbReference type="ChEBI" id="CHEBI:59558"/>
        <dbReference type="ChEBI" id="CHEBI:90546"/>
        <dbReference type="ChEBI" id="CHEBI:456215"/>
        <dbReference type="EC" id="6.2.1.2"/>
    </reaction>
    <physiologicalReaction direction="left-to-right" evidence="2">
        <dbReference type="Rhea" id="RHEA:48341"/>
    </physiologicalReaction>
</comment>
<comment type="cofactor">
    <cofactor evidence="2">
        <name>Mg(2+)</name>
        <dbReference type="ChEBI" id="CHEBI:18420"/>
    </cofactor>
    <cofactor evidence="2">
        <name>Mn(2+)</name>
        <dbReference type="ChEBI" id="CHEBI:29035"/>
    </cofactor>
</comment>
<comment type="subcellular location">
    <subcellularLocation>
        <location evidence="3">Mitochondrion matrix</location>
    </subcellularLocation>
</comment>
<comment type="alternative products">
    <event type="alternative splicing"/>
    <isoform>
        <id>Q8BGA8-1</id>
        <name>1</name>
        <sequence type="displayed"/>
    </isoform>
    <isoform>
        <id>Q8BGA8-2</id>
        <name>2</name>
        <sequence type="described" ref="VSP_028399 VSP_028400"/>
    </isoform>
</comment>
<comment type="similarity">
    <text evidence="7">Belongs to the ATP-dependent AMP-binding enzyme family.</text>
</comment>